<reference key="1">
    <citation type="journal article" date="1995" name="Gene">
        <title>Three genes hrdB, hrdD and hrdT of Streptomyces griseus IMRU 3570, encoding sigma factor-like proteins, are differentially expressed under specific nutritional conditions.</title>
        <authorList>
            <person name="Marcos A.T."/>
            <person name="Diez B."/>
            <person name="Gutierrez S."/>
            <person name="Fernandez F.J."/>
            <person name="Oguiza J.A."/>
            <person name="Martin J.F."/>
        </authorList>
    </citation>
    <scope>NUCLEOTIDE SEQUENCE [GENOMIC DNA]</scope>
    <source>
        <strain>IMRU 3570</strain>
    </source>
</reference>
<comment type="function">
    <text>Sigma factors are initiation factors that promote the attachment of RNA polymerase to specific initiation sites and are then released.</text>
</comment>
<comment type="similarity">
    <text evidence="3">Belongs to the sigma-70 factor family.</text>
</comment>
<feature type="chain" id="PRO_0000093995" description="RNA polymerase principal sigma factor HrdD">
    <location>
        <begin position="1"/>
        <end position="332"/>
    </location>
</feature>
<feature type="DNA-binding region" description="H-T-H motif" evidence="1">
    <location>
        <begin position="294"/>
        <end position="313"/>
    </location>
</feature>
<feature type="region of interest" description="Disordered" evidence="2">
    <location>
        <begin position="1"/>
        <end position="21"/>
    </location>
</feature>
<feature type="short sequence motif" description="Polymerase core binding">
    <location>
        <begin position="124"/>
        <end position="137"/>
    </location>
</feature>
<evidence type="ECO:0000250" key="1"/>
<evidence type="ECO:0000256" key="2">
    <source>
        <dbReference type="SAM" id="MobiDB-lite"/>
    </source>
</evidence>
<evidence type="ECO:0000305" key="3"/>
<gene>
    <name type="primary">hrdD</name>
</gene>
<dbReference type="EMBL" id="X79980">
    <property type="protein sequence ID" value="CAA56305.1"/>
    <property type="molecule type" value="Genomic_DNA"/>
</dbReference>
<dbReference type="PIR" id="S49185">
    <property type="entry name" value="S49185"/>
</dbReference>
<dbReference type="SMR" id="Q59914"/>
<dbReference type="STRING" id="1911.GCA_001715295_05820"/>
<dbReference type="GO" id="GO:0003677">
    <property type="term" value="F:DNA binding"/>
    <property type="evidence" value="ECO:0007669"/>
    <property type="project" value="UniProtKB-KW"/>
</dbReference>
<dbReference type="GO" id="GO:0016987">
    <property type="term" value="F:sigma factor activity"/>
    <property type="evidence" value="ECO:0007669"/>
    <property type="project" value="UniProtKB-KW"/>
</dbReference>
<dbReference type="GO" id="GO:0006352">
    <property type="term" value="P:DNA-templated transcription initiation"/>
    <property type="evidence" value="ECO:0007669"/>
    <property type="project" value="InterPro"/>
</dbReference>
<dbReference type="CDD" id="cd06171">
    <property type="entry name" value="Sigma70_r4"/>
    <property type="match status" value="1"/>
</dbReference>
<dbReference type="FunFam" id="1.10.601.10:FF:000001">
    <property type="entry name" value="RNA polymerase sigma factor SigA"/>
    <property type="match status" value="1"/>
</dbReference>
<dbReference type="Gene3D" id="1.10.601.10">
    <property type="entry name" value="RNA Polymerase Primary Sigma Factor"/>
    <property type="match status" value="1"/>
</dbReference>
<dbReference type="Gene3D" id="1.10.10.10">
    <property type="entry name" value="Winged helix-like DNA-binding domain superfamily/Winged helix DNA-binding domain"/>
    <property type="match status" value="2"/>
</dbReference>
<dbReference type="InterPro" id="IPR014284">
    <property type="entry name" value="RNA_pol_sigma-70_dom"/>
</dbReference>
<dbReference type="InterPro" id="IPR000943">
    <property type="entry name" value="RNA_pol_sigma70"/>
</dbReference>
<dbReference type="InterPro" id="IPR009042">
    <property type="entry name" value="RNA_pol_sigma70_r1_2"/>
</dbReference>
<dbReference type="InterPro" id="IPR007627">
    <property type="entry name" value="RNA_pol_sigma70_r2"/>
</dbReference>
<dbReference type="InterPro" id="IPR007624">
    <property type="entry name" value="RNA_pol_sigma70_r3"/>
</dbReference>
<dbReference type="InterPro" id="IPR007630">
    <property type="entry name" value="RNA_pol_sigma70_r4"/>
</dbReference>
<dbReference type="InterPro" id="IPR013325">
    <property type="entry name" value="RNA_pol_sigma_r2"/>
</dbReference>
<dbReference type="InterPro" id="IPR013324">
    <property type="entry name" value="RNA_pol_sigma_r3/r4-like"/>
</dbReference>
<dbReference type="InterPro" id="IPR050239">
    <property type="entry name" value="Sigma-70_RNA_pol_init_factors"/>
</dbReference>
<dbReference type="InterPro" id="IPR036388">
    <property type="entry name" value="WH-like_DNA-bd_sf"/>
</dbReference>
<dbReference type="NCBIfam" id="TIGR02937">
    <property type="entry name" value="sigma70-ECF"/>
    <property type="match status" value="1"/>
</dbReference>
<dbReference type="PANTHER" id="PTHR30603:SF59">
    <property type="entry name" value="RNA POLYMERASE PRINCIPAL SIGMA FACTOR HRDA"/>
    <property type="match status" value="1"/>
</dbReference>
<dbReference type="PANTHER" id="PTHR30603">
    <property type="entry name" value="RNA POLYMERASE SIGMA FACTOR RPO"/>
    <property type="match status" value="1"/>
</dbReference>
<dbReference type="Pfam" id="PF00140">
    <property type="entry name" value="Sigma70_r1_2"/>
    <property type="match status" value="1"/>
</dbReference>
<dbReference type="Pfam" id="PF04542">
    <property type="entry name" value="Sigma70_r2"/>
    <property type="match status" value="1"/>
</dbReference>
<dbReference type="Pfam" id="PF04539">
    <property type="entry name" value="Sigma70_r3"/>
    <property type="match status" value="1"/>
</dbReference>
<dbReference type="Pfam" id="PF04545">
    <property type="entry name" value="Sigma70_r4"/>
    <property type="match status" value="1"/>
</dbReference>
<dbReference type="PRINTS" id="PR00046">
    <property type="entry name" value="SIGMA70FCT"/>
</dbReference>
<dbReference type="SUPFAM" id="SSF88946">
    <property type="entry name" value="Sigma2 domain of RNA polymerase sigma factors"/>
    <property type="match status" value="1"/>
</dbReference>
<dbReference type="SUPFAM" id="SSF88659">
    <property type="entry name" value="Sigma3 and sigma4 domains of RNA polymerase sigma factors"/>
    <property type="match status" value="2"/>
</dbReference>
<dbReference type="PROSITE" id="PS00715">
    <property type="entry name" value="SIGMA70_1"/>
    <property type="match status" value="1"/>
</dbReference>
<dbReference type="PROSITE" id="PS00716">
    <property type="entry name" value="SIGMA70_2"/>
    <property type="match status" value="1"/>
</dbReference>
<name>HRDD_STRGR</name>
<protein>
    <recommendedName>
        <fullName>RNA polymerase principal sigma factor HrdD</fullName>
    </recommendedName>
</protein>
<proteinExistence type="inferred from homology"/>
<keyword id="KW-0238">DNA-binding</keyword>
<keyword id="KW-0731">Sigma factor</keyword>
<keyword id="KW-0804">Transcription</keyword>
<keyword id="KW-0805">Transcription regulation</keyword>
<accession>Q59914</accession>
<organism>
    <name type="scientific">Streptomyces griseus</name>
    <dbReference type="NCBI Taxonomy" id="1911"/>
    <lineage>
        <taxon>Bacteria</taxon>
        <taxon>Bacillati</taxon>
        <taxon>Actinomycetota</taxon>
        <taxon>Actinomycetes</taxon>
        <taxon>Kitasatosporales</taxon>
        <taxon>Streptomycetaceae</taxon>
        <taxon>Streptomyces</taxon>
    </lineage>
</organism>
<sequence>MATRAVARRQPAASGETGAAGSVRATGEIADRDLVGMYLDEIARTPLLDAAKEVELSQTIEAGVYAGKILDGEVDSDSAGASREELEALVAEGERAKDVFIRSNLRLVVAVARRYPRSGLPLLDLIQEGNAGLVRAVEKFDYAKGFKFSTYATWWIRQAITRSIADQSRTIRLPVHLVEELGRIRRVQREFNRENGRDPEPAEIAAELSSTPERVTDVLDWARDPVSLNMSVDDEGETQFGDLLEDTSAVSPEQSVLTLLRSEELDDLIGQLDDRTASIIKMRYGIEDGRERTLTEVGKQHGLTRERIRQIEKHALLELKRMAHDTGFDAAA</sequence>